<comment type="function">
    <text evidence="1">Catalyzes the synthesis of activated sulfate.</text>
</comment>
<comment type="catalytic activity">
    <reaction evidence="1">
        <text>adenosine 5'-phosphosulfate + ATP = 3'-phosphoadenylyl sulfate + ADP + H(+)</text>
        <dbReference type="Rhea" id="RHEA:24152"/>
        <dbReference type="ChEBI" id="CHEBI:15378"/>
        <dbReference type="ChEBI" id="CHEBI:30616"/>
        <dbReference type="ChEBI" id="CHEBI:58243"/>
        <dbReference type="ChEBI" id="CHEBI:58339"/>
        <dbReference type="ChEBI" id="CHEBI:456216"/>
        <dbReference type="EC" id="2.7.1.25"/>
    </reaction>
</comment>
<comment type="pathway">
    <text evidence="1">Sulfur metabolism; hydrogen sulfide biosynthesis; sulfite from sulfate: step 2/3.</text>
</comment>
<comment type="similarity">
    <text evidence="1">Belongs to the APS kinase family.</text>
</comment>
<evidence type="ECO:0000255" key="1">
    <source>
        <dbReference type="HAMAP-Rule" id="MF_00065"/>
    </source>
</evidence>
<name>CYSC_ECOBW</name>
<gene>
    <name evidence="1" type="primary">cysC</name>
    <name type="ordered locus">BWG_2486</name>
</gene>
<organism>
    <name type="scientific">Escherichia coli (strain K12 / MC4100 / BW2952)</name>
    <dbReference type="NCBI Taxonomy" id="595496"/>
    <lineage>
        <taxon>Bacteria</taxon>
        <taxon>Pseudomonadati</taxon>
        <taxon>Pseudomonadota</taxon>
        <taxon>Gammaproteobacteria</taxon>
        <taxon>Enterobacterales</taxon>
        <taxon>Enterobacteriaceae</taxon>
        <taxon>Escherichia</taxon>
    </lineage>
</organism>
<feature type="chain" id="PRO_1000202412" description="Adenylyl-sulfate kinase">
    <location>
        <begin position="1"/>
        <end position="201"/>
    </location>
</feature>
<feature type="active site" description="Phosphoserine intermediate" evidence="1">
    <location>
        <position position="109"/>
    </location>
</feature>
<feature type="binding site" evidence="1">
    <location>
        <begin position="35"/>
        <end position="42"/>
    </location>
    <ligand>
        <name>ATP</name>
        <dbReference type="ChEBI" id="CHEBI:30616"/>
    </ligand>
</feature>
<reference key="1">
    <citation type="journal article" date="2009" name="J. Bacteriol.">
        <title>Genomic sequencing reveals regulatory mutations and recombinational events in the widely used MC4100 lineage of Escherichia coli K-12.</title>
        <authorList>
            <person name="Ferenci T."/>
            <person name="Zhou Z."/>
            <person name="Betteridge T."/>
            <person name="Ren Y."/>
            <person name="Liu Y."/>
            <person name="Feng L."/>
            <person name="Reeves P.R."/>
            <person name="Wang L."/>
        </authorList>
    </citation>
    <scope>NUCLEOTIDE SEQUENCE [LARGE SCALE GENOMIC DNA]</scope>
    <source>
        <strain>K12 / MC4100 / BW2952</strain>
    </source>
</reference>
<sequence length="201" mass="22321">MALHDENVVWHSHPVTVQQRELHHGHRGVVLWFTGLSGSGKSTVAGALEEALHKLGVSTYLLDGDNVRHGLCSDLGFSDADRKENIRRVGEVANLMVEAGLVVLTAFISPHRAERQMVRERVGEGRFIEVFVDTPLAICEARDPKGLYKKARAGELRNFTGIDSVYEAPESAEIHLNGEQLVTNLVQQLLDLLRQNDIIRS</sequence>
<protein>
    <recommendedName>
        <fullName evidence="1">Adenylyl-sulfate kinase</fullName>
        <ecNumber evidence="1">2.7.1.25</ecNumber>
    </recommendedName>
    <alternativeName>
        <fullName evidence="1">APS kinase</fullName>
    </alternativeName>
    <alternativeName>
        <fullName evidence="1">ATP adenosine-5'-phosphosulfate 3'-phosphotransferase</fullName>
    </alternativeName>
    <alternativeName>
        <fullName evidence="1">Adenosine-5'-phosphosulfate kinase</fullName>
    </alternativeName>
</protein>
<accession>C4ZZQ4</accession>
<keyword id="KW-0067">ATP-binding</keyword>
<keyword id="KW-0418">Kinase</keyword>
<keyword id="KW-0547">Nucleotide-binding</keyword>
<keyword id="KW-0597">Phosphoprotein</keyword>
<keyword id="KW-0808">Transferase</keyword>
<proteinExistence type="inferred from homology"/>
<dbReference type="EC" id="2.7.1.25" evidence="1"/>
<dbReference type="EMBL" id="CP001396">
    <property type="protein sequence ID" value="ACR61929.1"/>
    <property type="molecule type" value="Genomic_DNA"/>
</dbReference>
<dbReference type="RefSeq" id="WP_001173673.1">
    <property type="nucleotide sequence ID" value="NC_012759.1"/>
</dbReference>
<dbReference type="SMR" id="C4ZZQ4"/>
<dbReference type="GeneID" id="93779256"/>
<dbReference type="KEGG" id="ebw:BWG_2486"/>
<dbReference type="HOGENOM" id="CLU_046932_1_0_6"/>
<dbReference type="UniPathway" id="UPA00140">
    <property type="reaction ID" value="UER00205"/>
</dbReference>
<dbReference type="GO" id="GO:0004020">
    <property type="term" value="F:adenylylsulfate kinase activity"/>
    <property type="evidence" value="ECO:0007669"/>
    <property type="project" value="UniProtKB-UniRule"/>
</dbReference>
<dbReference type="GO" id="GO:0005524">
    <property type="term" value="F:ATP binding"/>
    <property type="evidence" value="ECO:0007669"/>
    <property type="project" value="UniProtKB-UniRule"/>
</dbReference>
<dbReference type="GO" id="GO:0070814">
    <property type="term" value="P:hydrogen sulfide biosynthetic process"/>
    <property type="evidence" value="ECO:0007669"/>
    <property type="project" value="UniProtKB-UniRule"/>
</dbReference>
<dbReference type="GO" id="GO:0000103">
    <property type="term" value="P:sulfate assimilation"/>
    <property type="evidence" value="ECO:0007669"/>
    <property type="project" value="UniProtKB-UniRule"/>
</dbReference>
<dbReference type="CDD" id="cd02027">
    <property type="entry name" value="APSK"/>
    <property type="match status" value="1"/>
</dbReference>
<dbReference type="FunFam" id="3.40.50.300:FF:000212">
    <property type="entry name" value="Adenylyl-sulfate kinase"/>
    <property type="match status" value="1"/>
</dbReference>
<dbReference type="Gene3D" id="3.40.50.300">
    <property type="entry name" value="P-loop containing nucleotide triphosphate hydrolases"/>
    <property type="match status" value="1"/>
</dbReference>
<dbReference type="HAMAP" id="MF_00065">
    <property type="entry name" value="Adenylyl_sulf_kinase"/>
    <property type="match status" value="1"/>
</dbReference>
<dbReference type="InterPro" id="IPR002891">
    <property type="entry name" value="APS_kinase"/>
</dbReference>
<dbReference type="InterPro" id="IPR027417">
    <property type="entry name" value="P-loop_NTPase"/>
</dbReference>
<dbReference type="NCBIfam" id="TIGR00455">
    <property type="entry name" value="apsK"/>
    <property type="match status" value="1"/>
</dbReference>
<dbReference type="NCBIfam" id="NF003013">
    <property type="entry name" value="PRK03846.1"/>
    <property type="match status" value="1"/>
</dbReference>
<dbReference type="PANTHER" id="PTHR11055:SF63">
    <property type="entry name" value="ADENYLYL-SULFATE KINASE 1, CHLOROPLASTIC"/>
    <property type="match status" value="1"/>
</dbReference>
<dbReference type="PANTHER" id="PTHR11055">
    <property type="entry name" value="BIFUNCTIONAL 3'-PHOSPHOADENOSINE 5'-PHOSPHOSULFATE SYNTHASE"/>
    <property type="match status" value="1"/>
</dbReference>
<dbReference type="Pfam" id="PF01583">
    <property type="entry name" value="APS_kinase"/>
    <property type="match status" value="1"/>
</dbReference>
<dbReference type="SUPFAM" id="SSF52540">
    <property type="entry name" value="P-loop containing nucleoside triphosphate hydrolases"/>
    <property type="match status" value="1"/>
</dbReference>